<sequence length="729" mass="80734">MDAFKLLTRSTKFKAGNSLSSTLPSKGKAENPQLFRDAEAEKLLESNAFGKKRKRTQAAGDSDAEDGNAGDLDFFGSGKRSAASAPSKKDEDGPSEQKDASDSEGDDSMDEVERRTILNSHKIKVTDMRDFEELQPTQPQKEESKKKKKKRKQQEEEPAQTLTKKEQKKARRLFPEPLVSFKQLRTKYNISRRLAENIAEQGFTVPTEVQLGSLPLLLGDQSVPQKSGTEKSTEPDLLVVAPTGSGKTLSFMIPVINKIVRHHHEKPEERGILSVVIAPTKELASQIVNEGRKLALGTGVKITLMKKGMRVVERDDEDDSKDVLDEDDSESLGSEDDEKATAKNSKGKAPVTKSDILVTTPLLLVNALSANRTKPLATLPLVRNVVLDEADVLLDPLFRDQTLDIWRSCTHPELRASLWSATMGSNVEDLAKSTIKERKDTLSETKSYPLLRLVVGLKDSAIPNIKHKLVYAATEQGKLLGLRQLLHPAAASSTDIRLRPPFLIFTQTIPRAVALHSELRYDIPPEAGGSSRIAVLHSELSDGQRSEIMKQFRKGEIWILVTTDLLARGVDFRGINGVVNYDIPNSAAVYVHRVGRTGRAGREGGIAVTYYTKEDIPYVKSIANVIDVSEKLRGTDEEKSVQKWLLDALPDLSKKKKEELKKHGVKARQTQGTKDDKKTRISTKSGYERRQENKKKALISASRNRKSQPKSGADSGSDDDNQGWQGLED</sequence>
<organism>
    <name type="scientific">Aspergillus niger (strain ATCC MYA-4892 / CBS 513.88 / FGSC A1513)</name>
    <dbReference type="NCBI Taxonomy" id="425011"/>
    <lineage>
        <taxon>Eukaryota</taxon>
        <taxon>Fungi</taxon>
        <taxon>Dikarya</taxon>
        <taxon>Ascomycota</taxon>
        <taxon>Pezizomycotina</taxon>
        <taxon>Eurotiomycetes</taxon>
        <taxon>Eurotiomycetidae</taxon>
        <taxon>Eurotiales</taxon>
        <taxon>Aspergillaceae</taxon>
        <taxon>Aspergillus</taxon>
        <taxon>Aspergillus subgen. Circumdati</taxon>
    </lineage>
</organism>
<name>ROK1_ASPNC</name>
<keyword id="KW-0067">ATP-binding</keyword>
<keyword id="KW-0347">Helicase</keyword>
<keyword id="KW-0378">Hydrolase</keyword>
<keyword id="KW-0547">Nucleotide-binding</keyword>
<keyword id="KW-0539">Nucleus</keyword>
<keyword id="KW-1185">Reference proteome</keyword>
<keyword id="KW-0690">Ribosome biogenesis</keyword>
<keyword id="KW-0694">RNA-binding</keyword>
<keyword id="KW-0698">rRNA processing</keyword>
<reference key="1">
    <citation type="journal article" date="2007" name="Nat. Biotechnol.">
        <title>Genome sequencing and analysis of the versatile cell factory Aspergillus niger CBS 513.88.</title>
        <authorList>
            <person name="Pel H.J."/>
            <person name="de Winde J.H."/>
            <person name="Archer D.B."/>
            <person name="Dyer P.S."/>
            <person name="Hofmann G."/>
            <person name="Schaap P.J."/>
            <person name="Turner G."/>
            <person name="de Vries R.P."/>
            <person name="Albang R."/>
            <person name="Albermann K."/>
            <person name="Andersen M.R."/>
            <person name="Bendtsen J.D."/>
            <person name="Benen J.A.E."/>
            <person name="van den Berg M."/>
            <person name="Breestraat S."/>
            <person name="Caddick M.X."/>
            <person name="Contreras R."/>
            <person name="Cornell M."/>
            <person name="Coutinho P.M."/>
            <person name="Danchin E.G.J."/>
            <person name="Debets A.J.M."/>
            <person name="Dekker P."/>
            <person name="van Dijck P.W.M."/>
            <person name="van Dijk A."/>
            <person name="Dijkhuizen L."/>
            <person name="Driessen A.J.M."/>
            <person name="d'Enfert C."/>
            <person name="Geysens S."/>
            <person name="Goosen C."/>
            <person name="Groot G.S.P."/>
            <person name="de Groot P.W.J."/>
            <person name="Guillemette T."/>
            <person name="Henrissat B."/>
            <person name="Herweijer M."/>
            <person name="van den Hombergh J.P.T.W."/>
            <person name="van den Hondel C.A.M.J.J."/>
            <person name="van der Heijden R.T.J.M."/>
            <person name="van der Kaaij R.M."/>
            <person name="Klis F.M."/>
            <person name="Kools H.J."/>
            <person name="Kubicek C.P."/>
            <person name="van Kuyk P.A."/>
            <person name="Lauber J."/>
            <person name="Lu X."/>
            <person name="van der Maarel M.J.E.C."/>
            <person name="Meulenberg R."/>
            <person name="Menke H."/>
            <person name="Mortimer M.A."/>
            <person name="Nielsen J."/>
            <person name="Oliver S.G."/>
            <person name="Olsthoorn M."/>
            <person name="Pal K."/>
            <person name="van Peij N.N.M.E."/>
            <person name="Ram A.F.J."/>
            <person name="Rinas U."/>
            <person name="Roubos J.A."/>
            <person name="Sagt C.M.J."/>
            <person name="Schmoll M."/>
            <person name="Sun J."/>
            <person name="Ussery D."/>
            <person name="Varga J."/>
            <person name="Vervecken W."/>
            <person name="van de Vondervoort P.J.J."/>
            <person name="Wedler H."/>
            <person name="Woesten H.A.B."/>
            <person name="Zeng A.-P."/>
            <person name="van Ooyen A.J.J."/>
            <person name="Visser J."/>
            <person name="Stam H."/>
        </authorList>
    </citation>
    <scope>NUCLEOTIDE SEQUENCE [LARGE SCALE GENOMIC DNA]</scope>
    <source>
        <strain>ATCC MYA-4892 / CBS 513.88 / FGSC A1513</strain>
    </source>
</reference>
<evidence type="ECO:0000250" key="1"/>
<evidence type="ECO:0000255" key="2">
    <source>
        <dbReference type="PROSITE-ProRule" id="PRU00541"/>
    </source>
</evidence>
<evidence type="ECO:0000255" key="3">
    <source>
        <dbReference type="PROSITE-ProRule" id="PRU00542"/>
    </source>
</evidence>
<evidence type="ECO:0000256" key="4">
    <source>
        <dbReference type="SAM" id="MobiDB-lite"/>
    </source>
</evidence>
<evidence type="ECO:0000305" key="5"/>
<proteinExistence type="inferred from homology"/>
<protein>
    <recommendedName>
        <fullName>ATP-dependent RNA helicase rok1</fullName>
        <ecNumber>3.6.4.13</ecNumber>
    </recommendedName>
</protein>
<dbReference type="EC" id="3.6.4.13"/>
<dbReference type="EMBL" id="AM269980">
    <property type="protein sequence ID" value="CAK37267.1"/>
    <property type="status" value="ALT_SEQ"/>
    <property type="molecule type" value="Genomic_DNA"/>
</dbReference>
<dbReference type="RefSeq" id="XP_001389504.2">
    <property type="nucleotide sequence ID" value="XM_001389467.2"/>
</dbReference>
<dbReference type="SMR" id="A2QAB5"/>
<dbReference type="EnsemblFungi" id="CAK37267">
    <property type="protein sequence ID" value="CAK37267"/>
    <property type="gene ID" value="An01g10870"/>
</dbReference>
<dbReference type="OrthoDB" id="103878at5052"/>
<dbReference type="Proteomes" id="UP000006706">
    <property type="component" value="Chromosome 2R"/>
</dbReference>
<dbReference type="GO" id="GO:0005829">
    <property type="term" value="C:cytosol"/>
    <property type="evidence" value="ECO:0007669"/>
    <property type="project" value="TreeGrafter"/>
</dbReference>
<dbReference type="GO" id="GO:0005730">
    <property type="term" value="C:nucleolus"/>
    <property type="evidence" value="ECO:0007669"/>
    <property type="project" value="UniProtKB-SubCell"/>
</dbReference>
<dbReference type="GO" id="GO:0005524">
    <property type="term" value="F:ATP binding"/>
    <property type="evidence" value="ECO:0007669"/>
    <property type="project" value="UniProtKB-KW"/>
</dbReference>
<dbReference type="GO" id="GO:0016887">
    <property type="term" value="F:ATP hydrolysis activity"/>
    <property type="evidence" value="ECO:0007669"/>
    <property type="project" value="RHEA"/>
</dbReference>
<dbReference type="GO" id="GO:0003723">
    <property type="term" value="F:RNA binding"/>
    <property type="evidence" value="ECO:0007669"/>
    <property type="project" value="UniProtKB-KW"/>
</dbReference>
<dbReference type="GO" id="GO:0003724">
    <property type="term" value="F:RNA helicase activity"/>
    <property type="evidence" value="ECO:0007669"/>
    <property type="project" value="UniProtKB-EC"/>
</dbReference>
<dbReference type="GO" id="GO:0030490">
    <property type="term" value="P:maturation of SSU-rRNA"/>
    <property type="evidence" value="ECO:0007669"/>
    <property type="project" value="InterPro"/>
</dbReference>
<dbReference type="CDD" id="cd17957">
    <property type="entry name" value="DEADc_DDX52"/>
    <property type="match status" value="1"/>
</dbReference>
<dbReference type="CDD" id="cd18787">
    <property type="entry name" value="SF2_C_DEAD"/>
    <property type="match status" value="1"/>
</dbReference>
<dbReference type="Gene3D" id="3.40.50.300">
    <property type="entry name" value="P-loop containing nucleotide triphosphate hydrolases"/>
    <property type="match status" value="2"/>
</dbReference>
<dbReference type="InterPro" id="IPR044764">
    <property type="entry name" value="DDX52/Rok1_DEADc"/>
</dbReference>
<dbReference type="InterPro" id="IPR011545">
    <property type="entry name" value="DEAD/DEAH_box_helicase_dom"/>
</dbReference>
<dbReference type="InterPro" id="IPR050079">
    <property type="entry name" value="DEAD_box_RNA_helicase"/>
</dbReference>
<dbReference type="InterPro" id="IPR014001">
    <property type="entry name" value="Helicase_ATP-bd"/>
</dbReference>
<dbReference type="InterPro" id="IPR001650">
    <property type="entry name" value="Helicase_C-like"/>
</dbReference>
<dbReference type="InterPro" id="IPR027417">
    <property type="entry name" value="P-loop_NTPase"/>
</dbReference>
<dbReference type="PANTHER" id="PTHR47959">
    <property type="entry name" value="ATP-DEPENDENT RNA HELICASE RHLE-RELATED"/>
    <property type="match status" value="1"/>
</dbReference>
<dbReference type="PANTHER" id="PTHR47959:SF15">
    <property type="entry name" value="RNA HELICASE"/>
    <property type="match status" value="1"/>
</dbReference>
<dbReference type="Pfam" id="PF00270">
    <property type="entry name" value="DEAD"/>
    <property type="match status" value="1"/>
</dbReference>
<dbReference type="Pfam" id="PF00271">
    <property type="entry name" value="Helicase_C"/>
    <property type="match status" value="1"/>
</dbReference>
<dbReference type="SMART" id="SM00487">
    <property type="entry name" value="DEXDc"/>
    <property type="match status" value="1"/>
</dbReference>
<dbReference type="SMART" id="SM00490">
    <property type="entry name" value="HELICc"/>
    <property type="match status" value="1"/>
</dbReference>
<dbReference type="SUPFAM" id="SSF52540">
    <property type="entry name" value="P-loop containing nucleoside triphosphate hydrolases"/>
    <property type="match status" value="1"/>
</dbReference>
<dbReference type="PROSITE" id="PS51192">
    <property type="entry name" value="HELICASE_ATP_BIND_1"/>
    <property type="match status" value="1"/>
</dbReference>
<dbReference type="PROSITE" id="PS51194">
    <property type="entry name" value="HELICASE_CTER"/>
    <property type="match status" value="1"/>
</dbReference>
<dbReference type="PROSITE" id="PS51195">
    <property type="entry name" value="Q_MOTIF"/>
    <property type="match status" value="1"/>
</dbReference>
<gene>
    <name type="primary">rok1</name>
    <name type="ORF">An01g10870</name>
</gene>
<feature type="chain" id="PRO_0000282700" description="ATP-dependent RNA helicase rok1">
    <location>
        <begin position="1"/>
        <end position="729"/>
    </location>
</feature>
<feature type="domain" description="Helicase ATP-binding" evidence="2">
    <location>
        <begin position="228"/>
        <end position="441"/>
    </location>
</feature>
<feature type="domain" description="Helicase C-terminal" evidence="3">
    <location>
        <begin position="481"/>
        <end position="649"/>
    </location>
</feature>
<feature type="region of interest" description="Disordered" evidence="4">
    <location>
        <begin position="15"/>
        <end position="34"/>
    </location>
</feature>
<feature type="region of interest" description="Disordered" evidence="4">
    <location>
        <begin position="45"/>
        <end position="171"/>
    </location>
</feature>
<feature type="region of interest" description="Disordered" evidence="4">
    <location>
        <begin position="313"/>
        <end position="350"/>
    </location>
</feature>
<feature type="region of interest" description="Disordered" evidence="4">
    <location>
        <begin position="657"/>
        <end position="729"/>
    </location>
</feature>
<feature type="short sequence motif" description="Q motif">
    <location>
        <begin position="183"/>
        <end position="211"/>
    </location>
</feature>
<feature type="short sequence motif" description="DEAD box">
    <location>
        <begin position="388"/>
        <end position="391"/>
    </location>
</feature>
<feature type="compositionally biased region" description="Basic and acidic residues" evidence="4">
    <location>
        <begin position="87"/>
        <end position="101"/>
    </location>
</feature>
<feature type="compositionally biased region" description="Acidic residues" evidence="4">
    <location>
        <begin position="314"/>
        <end position="338"/>
    </location>
</feature>
<feature type="compositionally biased region" description="Basic and acidic residues" evidence="4">
    <location>
        <begin position="686"/>
        <end position="695"/>
    </location>
</feature>
<feature type="compositionally biased region" description="Basic residues" evidence="4">
    <location>
        <begin position="696"/>
        <end position="708"/>
    </location>
</feature>
<feature type="compositionally biased region" description="Acidic residues" evidence="4">
    <location>
        <begin position="716"/>
        <end position="729"/>
    </location>
</feature>
<feature type="binding site" evidence="2">
    <location>
        <begin position="241"/>
        <end position="248"/>
    </location>
    <ligand>
        <name>ATP</name>
        <dbReference type="ChEBI" id="CHEBI:30616"/>
    </ligand>
</feature>
<comment type="function">
    <text>ATP-dependent RNA helicase involved in 40S ribosomal subunit biogenesis. Required for the processing and cleavage of 35S pre-rRNA at sites A0, A1, and A2, leading to mature 18S rRNA.</text>
</comment>
<comment type="catalytic activity">
    <reaction>
        <text>ATP + H2O = ADP + phosphate + H(+)</text>
        <dbReference type="Rhea" id="RHEA:13065"/>
        <dbReference type="ChEBI" id="CHEBI:15377"/>
        <dbReference type="ChEBI" id="CHEBI:15378"/>
        <dbReference type="ChEBI" id="CHEBI:30616"/>
        <dbReference type="ChEBI" id="CHEBI:43474"/>
        <dbReference type="ChEBI" id="CHEBI:456216"/>
        <dbReference type="EC" id="3.6.4.13"/>
    </reaction>
</comment>
<comment type="subunit">
    <text evidence="1">Interacts with the U3 snoRNA and is associated with the 90S and 40S pre-ribosomes.</text>
</comment>
<comment type="subcellular location">
    <subcellularLocation>
        <location evidence="1">Nucleus</location>
        <location evidence="1">Nucleolus</location>
    </subcellularLocation>
</comment>
<comment type="domain">
    <text>The Q motif is unique to and characteristic of the DEAD box family of RNA helicases and controls ATP binding and hydrolysis.</text>
</comment>
<comment type="similarity">
    <text evidence="5">Belongs to the DEAD box helicase family. DDX52/ROK1 subfamily.</text>
</comment>
<comment type="sequence caution" evidence="5">
    <conflict type="erroneous gene model prediction">
        <sequence resource="EMBL-CDS" id="CAK37267"/>
    </conflict>
</comment>
<accession>A2QAB5</accession>